<name>MLA_ANOCA</name>
<sequence length="13" mass="1608">SYAMEHFRWGKPV</sequence>
<protein>
    <recommendedName>
        <fullName>Melanotropin alpha</fullName>
    </recommendedName>
    <alternativeName>
        <fullName>Alpha-MSH</fullName>
    </alternativeName>
</protein>
<organism>
    <name type="scientific">Anolis carolinensis</name>
    <name type="common">Green anole</name>
    <name type="synonym">American chameleon</name>
    <dbReference type="NCBI Taxonomy" id="28377"/>
    <lineage>
        <taxon>Eukaryota</taxon>
        <taxon>Metazoa</taxon>
        <taxon>Chordata</taxon>
        <taxon>Craniata</taxon>
        <taxon>Vertebrata</taxon>
        <taxon>Euteleostomi</taxon>
        <taxon>Lepidosauria</taxon>
        <taxon>Squamata</taxon>
        <taxon>Bifurcata</taxon>
        <taxon>Unidentata</taxon>
        <taxon>Episquamata</taxon>
        <taxon>Toxicofera</taxon>
        <taxon>Iguania</taxon>
        <taxon>Dactyloidae</taxon>
        <taxon>Anolis</taxon>
    </lineage>
</organism>
<proteinExistence type="evidence at protein level"/>
<feature type="peptide" id="PRO_0000044291" description="Melanotropin alpha">
    <location>
        <begin position="1"/>
        <end position="13"/>
    </location>
</feature>
<feature type="modified residue" description="Valine amide" evidence="1">
    <location>
        <position position="13"/>
    </location>
</feature>
<comment type="subcellular location">
    <subcellularLocation>
        <location>Secreted</location>
    </subcellularLocation>
</comment>
<comment type="similarity">
    <text evidence="2">Belongs to the POMC family.</text>
</comment>
<dbReference type="InParanoid" id="P41589"/>
<dbReference type="Proteomes" id="UP000001646">
    <property type="component" value="Unplaced"/>
</dbReference>
<dbReference type="GO" id="GO:0005576">
    <property type="term" value="C:extracellular region"/>
    <property type="evidence" value="ECO:0007669"/>
    <property type="project" value="UniProtKB-SubCell"/>
</dbReference>
<dbReference type="GO" id="GO:0005179">
    <property type="term" value="F:hormone activity"/>
    <property type="evidence" value="ECO:0007669"/>
    <property type="project" value="UniProtKB-KW"/>
</dbReference>
<dbReference type="InterPro" id="IPR013531">
    <property type="entry name" value="Mcrtin_ACTH_cent"/>
</dbReference>
<dbReference type="Pfam" id="PF00976">
    <property type="entry name" value="ACTH_domain"/>
    <property type="match status" value="1"/>
</dbReference>
<reference key="1">
    <citation type="journal article" date="1991" name="Peptides">
        <title>Detection of a novel sequence change in the major form of alpha-MSH isolated from the intermediate pituitary of the reptile, Anolis carolinensis.</title>
        <authorList>
            <person name="Dores R.M."/>
            <person name="Lancha A."/>
            <person name="Rand-Weaver M."/>
            <person name="Jankelow L."/>
            <person name="Adamczyk D.L."/>
        </authorList>
    </citation>
    <scope>PROTEIN SEQUENCE</scope>
    <scope>AMIDATION AT VAL-13</scope>
    <source>
        <tissue>Pituitary</tissue>
    </source>
</reference>
<evidence type="ECO:0000269" key="1">
    <source>
    </source>
</evidence>
<evidence type="ECO:0000305" key="2"/>
<accession>P41589</accession>
<keyword id="KW-0027">Amidation</keyword>
<keyword id="KW-0903">Direct protein sequencing</keyword>
<keyword id="KW-0372">Hormone</keyword>
<keyword id="KW-1185">Reference proteome</keyword>
<keyword id="KW-0964">Secreted</keyword>